<protein>
    <recommendedName>
        <fullName evidence="1">Tryptophan synthase alpha chain</fullName>
        <ecNumber evidence="1">4.2.1.20</ecNumber>
    </recommendedName>
</protein>
<proteinExistence type="inferred from homology"/>
<sequence>MNRITETFDRLAAKKEKALVGFVTAGDPAIETSEAIIRAMCEAGIDILELGVPFSDPTADGPVIQRSSQRALANGTNLQTVFDMTATLRKTFQGPIILFSYYNPIFRYGAENFYRDAKQAGADGVLVVDLPPEESAELTSCWKGDDFALIRLLAPTTPDGRIGAIAASASGFLYLVSMTGVTGSSGLDTTHIADLCAKVQRHTALPICVGFGVSTADDVAKIAQHADGVVIGSAFERLIEESIGKPDIAGILAERTREYKAATKM</sequence>
<evidence type="ECO:0000255" key="1">
    <source>
        <dbReference type="HAMAP-Rule" id="MF_00131"/>
    </source>
</evidence>
<keyword id="KW-0028">Amino-acid biosynthesis</keyword>
<keyword id="KW-0057">Aromatic amino acid biosynthesis</keyword>
<keyword id="KW-0456">Lyase</keyword>
<keyword id="KW-1185">Reference proteome</keyword>
<keyword id="KW-0822">Tryptophan biosynthesis</keyword>
<accession>A8ZZW7</accession>
<gene>
    <name evidence="1" type="primary">trpA</name>
    <name type="ordered locus">Dole_1563</name>
</gene>
<dbReference type="EC" id="4.2.1.20" evidence="1"/>
<dbReference type="EMBL" id="CP000859">
    <property type="protein sequence ID" value="ABW67367.1"/>
    <property type="molecule type" value="Genomic_DNA"/>
</dbReference>
<dbReference type="RefSeq" id="WP_012174983.1">
    <property type="nucleotide sequence ID" value="NC_009943.1"/>
</dbReference>
<dbReference type="SMR" id="A8ZZW7"/>
<dbReference type="STRING" id="96561.Dole_1563"/>
<dbReference type="KEGG" id="dol:Dole_1563"/>
<dbReference type="eggNOG" id="COG0159">
    <property type="taxonomic scope" value="Bacteria"/>
</dbReference>
<dbReference type="HOGENOM" id="CLU_016734_0_0_7"/>
<dbReference type="OrthoDB" id="9804578at2"/>
<dbReference type="UniPathway" id="UPA00035">
    <property type="reaction ID" value="UER00044"/>
</dbReference>
<dbReference type="Proteomes" id="UP000008561">
    <property type="component" value="Chromosome"/>
</dbReference>
<dbReference type="GO" id="GO:0005829">
    <property type="term" value="C:cytosol"/>
    <property type="evidence" value="ECO:0007669"/>
    <property type="project" value="TreeGrafter"/>
</dbReference>
<dbReference type="GO" id="GO:0004834">
    <property type="term" value="F:tryptophan synthase activity"/>
    <property type="evidence" value="ECO:0007669"/>
    <property type="project" value="UniProtKB-UniRule"/>
</dbReference>
<dbReference type="CDD" id="cd04724">
    <property type="entry name" value="Tryptophan_synthase_alpha"/>
    <property type="match status" value="1"/>
</dbReference>
<dbReference type="FunFam" id="3.20.20.70:FF:000037">
    <property type="entry name" value="Tryptophan synthase alpha chain"/>
    <property type="match status" value="1"/>
</dbReference>
<dbReference type="Gene3D" id="3.20.20.70">
    <property type="entry name" value="Aldolase class I"/>
    <property type="match status" value="1"/>
</dbReference>
<dbReference type="HAMAP" id="MF_00131">
    <property type="entry name" value="Trp_synth_alpha"/>
    <property type="match status" value="1"/>
</dbReference>
<dbReference type="InterPro" id="IPR013785">
    <property type="entry name" value="Aldolase_TIM"/>
</dbReference>
<dbReference type="InterPro" id="IPR011060">
    <property type="entry name" value="RibuloseP-bd_barrel"/>
</dbReference>
<dbReference type="InterPro" id="IPR002028">
    <property type="entry name" value="Trp_synthase_suA"/>
</dbReference>
<dbReference type="NCBIfam" id="TIGR00262">
    <property type="entry name" value="trpA"/>
    <property type="match status" value="1"/>
</dbReference>
<dbReference type="PANTHER" id="PTHR43406:SF1">
    <property type="entry name" value="TRYPTOPHAN SYNTHASE ALPHA CHAIN, CHLOROPLASTIC"/>
    <property type="match status" value="1"/>
</dbReference>
<dbReference type="PANTHER" id="PTHR43406">
    <property type="entry name" value="TRYPTOPHAN SYNTHASE, ALPHA CHAIN"/>
    <property type="match status" value="1"/>
</dbReference>
<dbReference type="Pfam" id="PF00290">
    <property type="entry name" value="Trp_syntA"/>
    <property type="match status" value="1"/>
</dbReference>
<dbReference type="SUPFAM" id="SSF51366">
    <property type="entry name" value="Ribulose-phoshate binding barrel"/>
    <property type="match status" value="1"/>
</dbReference>
<feature type="chain" id="PRO_1000095711" description="Tryptophan synthase alpha chain">
    <location>
        <begin position="1"/>
        <end position="265"/>
    </location>
</feature>
<feature type="active site" description="Proton acceptor" evidence="1">
    <location>
        <position position="49"/>
    </location>
</feature>
<feature type="active site" description="Proton acceptor" evidence="1">
    <location>
        <position position="60"/>
    </location>
</feature>
<reference key="1">
    <citation type="submission" date="2007-10" db="EMBL/GenBank/DDBJ databases">
        <title>Complete sequence of Desulfococcus oleovorans Hxd3.</title>
        <authorList>
            <consortium name="US DOE Joint Genome Institute"/>
            <person name="Copeland A."/>
            <person name="Lucas S."/>
            <person name="Lapidus A."/>
            <person name="Barry K."/>
            <person name="Glavina del Rio T."/>
            <person name="Dalin E."/>
            <person name="Tice H."/>
            <person name="Pitluck S."/>
            <person name="Kiss H."/>
            <person name="Brettin T."/>
            <person name="Bruce D."/>
            <person name="Detter J.C."/>
            <person name="Han C."/>
            <person name="Schmutz J."/>
            <person name="Larimer F."/>
            <person name="Land M."/>
            <person name="Hauser L."/>
            <person name="Kyrpides N."/>
            <person name="Kim E."/>
            <person name="Wawrik B."/>
            <person name="Richardson P."/>
        </authorList>
    </citation>
    <scope>NUCLEOTIDE SEQUENCE [LARGE SCALE GENOMIC DNA]</scope>
    <source>
        <strain>DSM 6200 / JCM 39069 / Hxd3</strain>
    </source>
</reference>
<organism>
    <name type="scientific">Desulfosudis oleivorans (strain DSM 6200 / JCM 39069 / Hxd3)</name>
    <name type="common">Desulfococcus oleovorans</name>
    <dbReference type="NCBI Taxonomy" id="96561"/>
    <lineage>
        <taxon>Bacteria</taxon>
        <taxon>Pseudomonadati</taxon>
        <taxon>Thermodesulfobacteriota</taxon>
        <taxon>Desulfobacteria</taxon>
        <taxon>Desulfobacterales</taxon>
        <taxon>Desulfosudaceae</taxon>
        <taxon>Desulfosudis</taxon>
    </lineage>
</organism>
<name>TRPA_DESOH</name>
<comment type="function">
    <text evidence="1">The alpha subunit is responsible for the aldol cleavage of indoleglycerol phosphate to indole and glyceraldehyde 3-phosphate.</text>
</comment>
<comment type="catalytic activity">
    <reaction evidence="1">
        <text>(1S,2R)-1-C-(indol-3-yl)glycerol 3-phosphate + L-serine = D-glyceraldehyde 3-phosphate + L-tryptophan + H2O</text>
        <dbReference type="Rhea" id="RHEA:10532"/>
        <dbReference type="ChEBI" id="CHEBI:15377"/>
        <dbReference type="ChEBI" id="CHEBI:33384"/>
        <dbReference type="ChEBI" id="CHEBI:57912"/>
        <dbReference type="ChEBI" id="CHEBI:58866"/>
        <dbReference type="ChEBI" id="CHEBI:59776"/>
        <dbReference type="EC" id="4.2.1.20"/>
    </reaction>
</comment>
<comment type="pathway">
    <text evidence="1">Amino-acid biosynthesis; L-tryptophan biosynthesis; L-tryptophan from chorismate: step 5/5.</text>
</comment>
<comment type="subunit">
    <text evidence="1">Tetramer of two alpha and two beta chains.</text>
</comment>
<comment type="similarity">
    <text evidence="1">Belongs to the TrpA family.</text>
</comment>